<organism>
    <name type="scientific">Lodderomyces elongisporus (strain ATCC 11503 / CBS 2605 / JCM 1781 / NBRC 1676 / NRRL YB-4239)</name>
    <name type="common">Yeast</name>
    <name type="synonym">Saccharomyces elongisporus</name>
    <dbReference type="NCBI Taxonomy" id="379508"/>
    <lineage>
        <taxon>Eukaryota</taxon>
        <taxon>Fungi</taxon>
        <taxon>Dikarya</taxon>
        <taxon>Ascomycota</taxon>
        <taxon>Saccharomycotina</taxon>
        <taxon>Pichiomycetes</taxon>
        <taxon>Debaryomycetaceae</taxon>
        <taxon>Candida/Lodderomyces clade</taxon>
        <taxon>Lodderomyces</taxon>
    </lineage>
</organism>
<gene>
    <name evidence="1" type="primary">TIF35</name>
    <name type="ORF">LELG_03631</name>
</gene>
<dbReference type="EMBL" id="CH981527">
    <property type="protein sequence ID" value="EDK45452.1"/>
    <property type="molecule type" value="Genomic_DNA"/>
</dbReference>
<dbReference type="RefSeq" id="XP_001525703.1">
    <property type="nucleotide sequence ID" value="XM_001525653.1"/>
</dbReference>
<dbReference type="SMR" id="A5E1Z4"/>
<dbReference type="FunCoup" id="A5E1Z4">
    <property type="interactions" value="1068"/>
</dbReference>
<dbReference type="STRING" id="379508.A5E1Z4"/>
<dbReference type="GeneID" id="5232577"/>
<dbReference type="KEGG" id="lel:PVL30_003115"/>
<dbReference type="VEuPathDB" id="FungiDB:LELG_03631"/>
<dbReference type="eggNOG" id="KOG0122">
    <property type="taxonomic scope" value="Eukaryota"/>
</dbReference>
<dbReference type="HOGENOM" id="CLU_034595_0_0_1"/>
<dbReference type="InParanoid" id="A5E1Z4"/>
<dbReference type="OMA" id="ICQGDHF"/>
<dbReference type="OrthoDB" id="639027at2759"/>
<dbReference type="Proteomes" id="UP000001996">
    <property type="component" value="Unassembled WGS sequence"/>
</dbReference>
<dbReference type="GO" id="GO:0016282">
    <property type="term" value="C:eukaryotic 43S preinitiation complex"/>
    <property type="evidence" value="ECO:0007669"/>
    <property type="project" value="UniProtKB-UniRule"/>
</dbReference>
<dbReference type="GO" id="GO:0033290">
    <property type="term" value="C:eukaryotic 48S preinitiation complex"/>
    <property type="evidence" value="ECO:0007669"/>
    <property type="project" value="UniProtKB-UniRule"/>
</dbReference>
<dbReference type="GO" id="GO:0071540">
    <property type="term" value="C:eukaryotic translation initiation factor 3 complex, eIF3e"/>
    <property type="evidence" value="ECO:0007669"/>
    <property type="project" value="EnsemblFungi"/>
</dbReference>
<dbReference type="GO" id="GO:0071541">
    <property type="term" value="C:eukaryotic translation initiation factor 3 complex, eIF3m"/>
    <property type="evidence" value="ECO:0007669"/>
    <property type="project" value="EnsemblFungi"/>
</dbReference>
<dbReference type="GO" id="GO:0043614">
    <property type="term" value="C:multi-eIF complex"/>
    <property type="evidence" value="ECO:0007669"/>
    <property type="project" value="EnsemblFungi"/>
</dbReference>
<dbReference type="GO" id="GO:0003723">
    <property type="term" value="F:RNA binding"/>
    <property type="evidence" value="ECO:0007669"/>
    <property type="project" value="UniProtKB-UniRule"/>
</dbReference>
<dbReference type="GO" id="GO:0003743">
    <property type="term" value="F:translation initiation factor activity"/>
    <property type="evidence" value="ECO:0007669"/>
    <property type="project" value="UniProtKB-UniRule"/>
</dbReference>
<dbReference type="GO" id="GO:0001732">
    <property type="term" value="P:formation of cytoplasmic translation initiation complex"/>
    <property type="evidence" value="ECO:0007669"/>
    <property type="project" value="UniProtKB-UniRule"/>
</dbReference>
<dbReference type="GO" id="GO:0002188">
    <property type="term" value="P:translation reinitiation"/>
    <property type="evidence" value="ECO:0007669"/>
    <property type="project" value="EnsemblFungi"/>
</dbReference>
<dbReference type="GO" id="GO:0006415">
    <property type="term" value="P:translational termination"/>
    <property type="evidence" value="ECO:0007669"/>
    <property type="project" value="EnsemblFungi"/>
</dbReference>
<dbReference type="CDD" id="cd12933">
    <property type="entry name" value="eIF3G"/>
    <property type="match status" value="1"/>
</dbReference>
<dbReference type="CDD" id="cd12408">
    <property type="entry name" value="RRM_eIF3G_like"/>
    <property type="match status" value="1"/>
</dbReference>
<dbReference type="Gene3D" id="3.30.70.330">
    <property type="match status" value="1"/>
</dbReference>
<dbReference type="HAMAP" id="MF_03006">
    <property type="entry name" value="eIF3g"/>
    <property type="match status" value="1"/>
</dbReference>
<dbReference type="InterPro" id="IPR017334">
    <property type="entry name" value="eIF3_g"/>
</dbReference>
<dbReference type="InterPro" id="IPR024675">
    <property type="entry name" value="eIF3g_N"/>
</dbReference>
<dbReference type="InterPro" id="IPR034240">
    <property type="entry name" value="eIF3G_RRM"/>
</dbReference>
<dbReference type="InterPro" id="IPR012677">
    <property type="entry name" value="Nucleotide-bd_a/b_plait_sf"/>
</dbReference>
<dbReference type="InterPro" id="IPR035979">
    <property type="entry name" value="RBD_domain_sf"/>
</dbReference>
<dbReference type="InterPro" id="IPR000504">
    <property type="entry name" value="RRM_dom"/>
</dbReference>
<dbReference type="PANTHER" id="PTHR10352">
    <property type="entry name" value="EUKARYOTIC TRANSLATION INITIATION FACTOR 3 SUBUNIT G"/>
    <property type="match status" value="1"/>
</dbReference>
<dbReference type="Pfam" id="PF12353">
    <property type="entry name" value="eIF3g"/>
    <property type="match status" value="1"/>
</dbReference>
<dbReference type="Pfam" id="PF00076">
    <property type="entry name" value="RRM_1"/>
    <property type="match status" value="1"/>
</dbReference>
<dbReference type="PIRSF" id="PIRSF037949">
    <property type="entry name" value="Transl_init_eIF-3_RNA-bind"/>
    <property type="match status" value="1"/>
</dbReference>
<dbReference type="SMART" id="SM00360">
    <property type="entry name" value="RRM"/>
    <property type="match status" value="1"/>
</dbReference>
<dbReference type="SUPFAM" id="SSF54928">
    <property type="entry name" value="RNA-binding domain, RBD"/>
    <property type="match status" value="1"/>
</dbReference>
<dbReference type="PROSITE" id="PS50102">
    <property type="entry name" value="RRM"/>
    <property type="match status" value="1"/>
</dbReference>
<sequence length="279" mass="30950">MSSAIESWADAGDEFSVPADIIQNPDGTKTVITFRTNQDGKKVKITQKIKEVIVREKVHPLIAQRKNWAKYGKEKHSSPGPDTSTTQLGEKVDLKLGLSWKQVEKKEEEDKAQERASRVVVQTIKCRVCGGDHYTAKCPFKDTLGASTLNGGTPEPGSEGAGDADAVTSTGRYIPRHLRPDANGNIPTREARDDSTTLKVSQLNTFVDEDMLRNELFARFGPLQRVTVVRDRETGESRGFAYVSFATEEIAQKALDLLNGKGYHSLILHLEWSKKKKPL</sequence>
<comment type="function">
    <text evidence="1">RNA-binding component of the eukaryotic translation initiation factor 3 (eIF-3) complex, which is involved in protein synthesis of a specialized repertoire of mRNAs and, together with other initiation factors, stimulates binding of mRNA and methionyl-tRNAi to the 40S ribosome. The eIF-3 complex specifically targets and initiates translation of a subset of mRNAs involved in cell proliferation. This subunit can bind 18S rRNA.</text>
</comment>
<comment type="subunit">
    <text evidence="1">Component of the eukaryotic translation initiation factor 3 (eIF-3) complex.</text>
</comment>
<comment type="subcellular location">
    <subcellularLocation>
        <location evidence="1">Cytoplasm</location>
    </subcellularLocation>
</comment>
<comment type="similarity">
    <text evidence="1">Belongs to the eIF-3 subunit G family.</text>
</comment>
<keyword id="KW-0963">Cytoplasm</keyword>
<keyword id="KW-0396">Initiation factor</keyword>
<keyword id="KW-0597">Phosphoprotein</keyword>
<keyword id="KW-0648">Protein biosynthesis</keyword>
<keyword id="KW-1185">Reference proteome</keyword>
<keyword id="KW-0694">RNA-binding</keyword>
<feature type="chain" id="PRO_0000366892" description="Eukaryotic translation initiation factor 3 subunit G">
    <location>
        <begin position="1"/>
        <end position="279"/>
    </location>
</feature>
<feature type="domain" description="RRM" evidence="1">
    <location>
        <begin position="196"/>
        <end position="275"/>
    </location>
</feature>
<feature type="region of interest" description="Disordered" evidence="2">
    <location>
        <begin position="69"/>
        <end position="90"/>
    </location>
</feature>
<feature type="region of interest" description="Disordered" evidence="2">
    <location>
        <begin position="149"/>
        <end position="193"/>
    </location>
</feature>
<feature type="modified residue" description="Phosphoserine" evidence="1">
    <location>
        <position position="77"/>
    </location>
</feature>
<accession>A5E1Z4</accession>
<name>EIF3G_LODEL</name>
<evidence type="ECO:0000255" key="1">
    <source>
        <dbReference type="HAMAP-Rule" id="MF_03006"/>
    </source>
</evidence>
<evidence type="ECO:0000256" key="2">
    <source>
        <dbReference type="SAM" id="MobiDB-lite"/>
    </source>
</evidence>
<protein>
    <recommendedName>
        <fullName evidence="1">Eukaryotic translation initiation factor 3 subunit G</fullName>
        <shortName evidence="1">eIF3g</shortName>
    </recommendedName>
    <alternativeName>
        <fullName evidence="1">Eukaryotic translation initiation factor 3 RNA-binding subunit</fullName>
        <shortName evidence="1">eIF-3 RNA-binding subunit</shortName>
    </alternativeName>
    <alternativeName>
        <fullName evidence="1">Translation initiation factor eIF3 p33 subunit homolog</fullName>
        <shortName evidence="1">eIF3 p33 homolog</shortName>
    </alternativeName>
</protein>
<reference key="1">
    <citation type="journal article" date="2009" name="Nature">
        <title>Evolution of pathogenicity and sexual reproduction in eight Candida genomes.</title>
        <authorList>
            <person name="Butler G."/>
            <person name="Rasmussen M.D."/>
            <person name="Lin M.F."/>
            <person name="Santos M.A.S."/>
            <person name="Sakthikumar S."/>
            <person name="Munro C.A."/>
            <person name="Rheinbay E."/>
            <person name="Grabherr M."/>
            <person name="Forche A."/>
            <person name="Reedy J.L."/>
            <person name="Agrafioti I."/>
            <person name="Arnaud M.B."/>
            <person name="Bates S."/>
            <person name="Brown A.J.P."/>
            <person name="Brunke S."/>
            <person name="Costanzo M.C."/>
            <person name="Fitzpatrick D.A."/>
            <person name="de Groot P.W.J."/>
            <person name="Harris D."/>
            <person name="Hoyer L.L."/>
            <person name="Hube B."/>
            <person name="Klis F.M."/>
            <person name="Kodira C."/>
            <person name="Lennard N."/>
            <person name="Logue M.E."/>
            <person name="Martin R."/>
            <person name="Neiman A.M."/>
            <person name="Nikolaou E."/>
            <person name="Quail M.A."/>
            <person name="Quinn J."/>
            <person name="Santos M.C."/>
            <person name="Schmitzberger F.F."/>
            <person name="Sherlock G."/>
            <person name="Shah P."/>
            <person name="Silverstein K.A.T."/>
            <person name="Skrzypek M.S."/>
            <person name="Soll D."/>
            <person name="Staggs R."/>
            <person name="Stansfield I."/>
            <person name="Stumpf M.P.H."/>
            <person name="Sudbery P.E."/>
            <person name="Srikantha T."/>
            <person name="Zeng Q."/>
            <person name="Berman J."/>
            <person name="Berriman M."/>
            <person name="Heitman J."/>
            <person name="Gow N.A.R."/>
            <person name="Lorenz M.C."/>
            <person name="Birren B.W."/>
            <person name="Kellis M."/>
            <person name="Cuomo C.A."/>
        </authorList>
    </citation>
    <scope>NUCLEOTIDE SEQUENCE [LARGE SCALE GENOMIC DNA]</scope>
    <source>
        <strain>ATCC 11503 / BCRC 21390 / CBS 2605 / JCM 1781 / NBRC 1676 / NRRL YB-4239</strain>
    </source>
</reference>
<proteinExistence type="inferred from homology"/>